<proteinExistence type="inferred from homology"/>
<evidence type="ECO:0000255" key="1">
    <source>
        <dbReference type="HAMAP-Rule" id="MF_01357"/>
    </source>
</evidence>
<comment type="function">
    <text evidence="1">NDH-1 shuttles electrons from NADH, via FMN and iron-sulfur (Fe-S) centers, to quinones in the respiratory chain. The immediate electron acceptor for the enzyme in this species is believed to be ubiquinone. Couples the redox reaction to proton translocation (for every two electrons transferred, four hydrogen ions are translocated across the cytoplasmic membrane), and thus conserves the redox energy in a proton gradient.</text>
</comment>
<comment type="catalytic activity">
    <reaction evidence="1">
        <text>a quinone + NADH + 5 H(+)(in) = a quinol + NAD(+) + 4 H(+)(out)</text>
        <dbReference type="Rhea" id="RHEA:57888"/>
        <dbReference type="ChEBI" id="CHEBI:15378"/>
        <dbReference type="ChEBI" id="CHEBI:24646"/>
        <dbReference type="ChEBI" id="CHEBI:57540"/>
        <dbReference type="ChEBI" id="CHEBI:57945"/>
        <dbReference type="ChEBI" id="CHEBI:132124"/>
    </reaction>
</comment>
<comment type="subunit">
    <text evidence="1">NDH-1 is composed of 14 different subunits. Subunits NuoB, C, D, E, F, and G constitute the peripheral sector of the complex.</text>
</comment>
<comment type="subcellular location">
    <subcellularLocation>
        <location evidence="1">Cell inner membrane</location>
        <topology evidence="1">Peripheral membrane protein</topology>
        <orientation evidence="1">Cytoplasmic side</orientation>
    </subcellularLocation>
</comment>
<comment type="similarity">
    <text evidence="1">Belongs to the complex I 30 kDa subunit family.</text>
</comment>
<accession>Q8YGK2</accession>
<dbReference type="EC" id="7.1.1.-" evidence="1"/>
<dbReference type="EMBL" id="AE008917">
    <property type="protein sequence ID" value="AAL52337.1"/>
    <property type="molecule type" value="Genomic_DNA"/>
</dbReference>
<dbReference type="PIR" id="AF3396">
    <property type="entry name" value="AF3396"/>
</dbReference>
<dbReference type="RefSeq" id="WP_002967574.1">
    <property type="nucleotide sequence ID" value="NZ_GG703778.1"/>
</dbReference>
<dbReference type="SMR" id="Q8YGK2"/>
<dbReference type="KEGG" id="bme:BMEI1156"/>
<dbReference type="KEGG" id="bmel:DK63_257"/>
<dbReference type="PATRIC" id="fig|224914.52.peg.266"/>
<dbReference type="eggNOG" id="COG0852">
    <property type="taxonomic scope" value="Bacteria"/>
</dbReference>
<dbReference type="PhylomeDB" id="Q8YGK2"/>
<dbReference type="Proteomes" id="UP000000419">
    <property type="component" value="Chromosome I"/>
</dbReference>
<dbReference type="GO" id="GO:0005886">
    <property type="term" value="C:plasma membrane"/>
    <property type="evidence" value="ECO:0007669"/>
    <property type="project" value="UniProtKB-SubCell"/>
</dbReference>
<dbReference type="GO" id="GO:0008137">
    <property type="term" value="F:NADH dehydrogenase (ubiquinone) activity"/>
    <property type="evidence" value="ECO:0007669"/>
    <property type="project" value="InterPro"/>
</dbReference>
<dbReference type="GO" id="GO:0050136">
    <property type="term" value="F:NADH:ubiquinone reductase (non-electrogenic) activity"/>
    <property type="evidence" value="ECO:0007669"/>
    <property type="project" value="UniProtKB-UniRule"/>
</dbReference>
<dbReference type="GO" id="GO:0048038">
    <property type="term" value="F:quinone binding"/>
    <property type="evidence" value="ECO:0007669"/>
    <property type="project" value="UniProtKB-KW"/>
</dbReference>
<dbReference type="Gene3D" id="3.30.460.80">
    <property type="entry name" value="NADH:ubiquinone oxidoreductase, 30kDa subunit"/>
    <property type="match status" value="1"/>
</dbReference>
<dbReference type="HAMAP" id="MF_01357">
    <property type="entry name" value="NDH1_NuoC"/>
    <property type="match status" value="1"/>
</dbReference>
<dbReference type="InterPro" id="IPR010218">
    <property type="entry name" value="NADH_DH_suC"/>
</dbReference>
<dbReference type="InterPro" id="IPR037232">
    <property type="entry name" value="NADH_quin_OxRdtase_su_C/D-like"/>
</dbReference>
<dbReference type="InterPro" id="IPR001268">
    <property type="entry name" value="NADH_UbQ_OxRdtase_30kDa_su"/>
</dbReference>
<dbReference type="InterPro" id="IPR020396">
    <property type="entry name" value="NADH_UbQ_OxRdtase_CS"/>
</dbReference>
<dbReference type="NCBIfam" id="TIGR01961">
    <property type="entry name" value="NuoC_fam"/>
    <property type="match status" value="1"/>
</dbReference>
<dbReference type="NCBIfam" id="NF004730">
    <property type="entry name" value="PRK06074.1-1"/>
    <property type="match status" value="1"/>
</dbReference>
<dbReference type="NCBIfam" id="NF004733">
    <property type="entry name" value="PRK06074.1-5"/>
    <property type="match status" value="1"/>
</dbReference>
<dbReference type="PANTHER" id="PTHR10884:SF14">
    <property type="entry name" value="NADH DEHYDROGENASE [UBIQUINONE] IRON-SULFUR PROTEIN 3, MITOCHONDRIAL"/>
    <property type="match status" value="1"/>
</dbReference>
<dbReference type="PANTHER" id="PTHR10884">
    <property type="entry name" value="NADH DEHYDROGENASE UBIQUINONE IRON-SULFUR PROTEIN 3"/>
    <property type="match status" value="1"/>
</dbReference>
<dbReference type="Pfam" id="PF00329">
    <property type="entry name" value="Complex1_30kDa"/>
    <property type="match status" value="1"/>
</dbReference>
<dbReference type="SUPFAM" id="SSF143243">
    <property type="entry name" value="Nqo5-like"/>
    <property type="match status" value="1"/>
</dbReference>
<dbReference type="PROSITE" id="PS00542">
    <property type="entry name" value="COMPLEX1_30K"/>
    <property type="match status" value="1"/>
</dbReference>
<reference key="1">
    <citation type="journal article" date="2002" name="Proc. Natl. Acad. Sci. U.S.A.">
        <title>The genome sequence of the facultative intracellular pathogen Brucella melitensis.</title>
        <authorList>
            <person name="DelVecchio V.G."/>
            <person name="Kapatral V."/>
            <person name="Redkar R.J."/>
            <person name="Patra G."/>
            <person name="Mujer C."/>
            <person name="Los T."/>
            <person name="Ivanova N."/>
            <person name="Anderson I."/>
            <person name="Bhattacharyya A."/>
            <person name="Lykidis A."/>
            <person name="Reznik G."/>
            <person name="Jablonski L."/>
            <person name="Larsen N."/>
            <person name="D'Souza M."/>
            <person name="Bernal A."/>
            <person name="Mazur M."/>
            <person name="Goltsman E."/>
            <person name="Selkov E."/>
            <person name="Elzer P.H."/>
            <person name="Hagius S."/>
            <person name="O'Callaghan D."/>
            <person name="Letesson J.-J."/>
            <person name="Haselkorn R."/>
            <person name="Kyrpides N.C."/>
            <person name="Overbeek R."/>
        </authorList>
    </citation>
    <scope>NUCLEOTIDE SEQUENCE [LARGE SCALE GENOMIC DNA]</scope>
    <source>
        <strain>ATCC 23456 / CCUG 17765 / NCTC 10094 / 16M</strain>
    </source>
</reference>
<protein>
    <recommendedName>
        <fullName evidence="1">NADH-quinone oxidoreductase subunit C</fullName>
        <ecNumber evidence="1">7.1.1.-</ecNumber>
    </recommendedName>
    <alternativeName>
        <fullName evidence="1">NADH dehydrogenase I subunit C</fullName>
    </alternativeName>
    <alternativeName>
        <fullName evidence="1">NDH-1 subunit C</fullName>
    </alternativeName>
</protein>
<organism>
    <name type="scientific">Brucella melitensis biotype 1 (strain ATCC 23456 / CCUG 17765 / NCTC 10094 / 16M)</name>
    <dbReference type="NCBI Taxonomy" id="224914"/>
    <lineage>
        <taxon>Bacteria</taxon>
        <taxon>Pseudomonadati</taxon>
        <taxon>Pseudomonadota</taxon>
        <taxon>Alphaproteobacteria</taxon>
        <taxon>Hyphomicrobiales</taxon>
        <taxon>Brucellaceae</taxon>
        <taxon>Brucella/Ochrobactrum group</taxon>
        <taxon>Brucella</taxon>
    </lineage>
</organism>
<gene>
    <name evidence="1" type="primary">nuoC</name>
    <name type="ordered locus">BMEI1156</name>
</gene>
<sequence length="202" mass="23343">MSEEALGELSGYIRERLGDAIEEANLAYGELTLCVPVASLIGVLTFLRDDVQCQFVNLTDISGVDYPQREKRFDVVYQLLSPRQNQRIRVKVQADEDTLVPSAVPVFFGAEWYEREAYDMYGILFSGHPDLRRILTDYGFEGHPLRKDFPLTGFVEVRYNDELKRVVYEPVQLRQEFRNFDFLSPWEGTDYVLPGDEKAKTN</sequence>
<name>NUOC_BRUME</name>
<keyword id="KW-0997">Cell inner membrane</keyword>
<keyword id="KW-1003">Cell membrane</keyword>
<keyword id="KW-0472">Membrane</keyword>
<keyword id="KW-0520">NAD</keyword>
<keyword id="KW-0874">Quinone</keyword>
<keyword id="KW-1278">Translocase</keyword>
<keyword id="KW-0813">Transport</keyword>
<keyword id="KW-0830">Ubiquinone</keyword>
<feature type="chain" id="PRO_0000358054" description="NADH-quinone oxidoreductase subunit C">
    <location>
        <begin position="1"/>
        <end position="202"/>
    </location>
</feature>